<accession>P14819</accession>
<feature type="initiator methionine" description="Removed; by host" evidence="2">
    <location>
        <position position="1"/>
    </location>
</feature>
<feature type="chain" id="PRO_0000149712" description="Repressor protein CI">
    <location>
        <begin position="2"/>
        <end position="236"/>
    </location>
</feature>
<feature type="domain" description="HTH cro/C1-type" evidence="1">
    <location>
        <begin position="8"/>
        <end position="61"/>
    </location>
</feature>
<feature type="DNA-binding region" description="H-T-H motif" evidence="1">
    <location>
        <begin position="19"/>
        <end position="38"/>
    </location>
</feature>
<evidence type="ECO:0000255" key="1">
    <source>
        <dbReference type="PROSITE-ProRule" id="PRU00257"/>
    </source>
</evidence>
<evidence type="ECO:0000269" key="2">
    <source>
    </source>
</evidence>
<name>RPC1_BPPH8</name>
<proteinExistence type="evidence at protein level"/>
<reference key="1">
    <citation type="journal article" date="1988" name="J. Mol. Biol.">
        <title>Organization of the early region of bacteriophage phi 80. Genes and proteins.</title>
        <authorList>
            <person name="Ogawa T."/>
            <person name="Ogawa H."/>
            <person name="Tomizawa J."/>
        </authorList>
    </citation>
    <scope>NUCLEOTIDE SEQUENCE [GENOMIC DNA]</scope>
</reference>
<reference key="2">
    <citation type="journal article" date="1988" name="J. Mol. Biol.">
        <title>Cleavage of bacteriophage phi 80 CI repressor by RecA protein.</title>
        <authorList>
            <person name="Eguchi Y."/>
            <person name="Ogawa T."/>
            <person name="Ogawa H."/>
        </authorList>
    </citation>
    <scope>PROTEIN SEQUENCE OF 2-6</scope>
</reference>
<organism>
    <name type="scientific">Enterobacteria phage phi80</name>
    <name type="common">Bacteriophage phi-80</name>
    <dbReference type="NCBI Taxonomy" id="10713"/>
    <lineage>
        <taxon>Viruses</taxon>
        <taxon>Duplodnaviria</taxon>
        <taxon>Heunggongvirae</taxon>
        <taxon>Uroviricota</taxon>
        <taxon>Caudoviricetes</taxon>
    </lineage>
</organism>
<keyword id="KW-0903">Direct protein sequencing</keyword>
<keyword id="KW-0238">DNA-binding</keyword>
<keyword id="KW-0244">Early protein</keyword>
<keyword id="KW-0678">Repressor</keyword>
<keyword id="KW-0804">Transcription</keyword>
<keyword id="KW-0805">Transcription regulation</keyword>
<organismHost>
    <name type="scientific">Escherichia coli</name>
    <dbReference type="NCBI Taxonomy" id="562"/>
</organismHost>
<protein>
    <recommendedName>
        <fullName>Repressor protein CI</fullName>
    </recommendedName>
</protein>
<gene>
    <name type="primary">CI</name>
</gene>
<dbReference type="EMBL" id="X13065">
    <property type="protein sequence ID" value="CAA31471.1"/>
    <property type="molecule type" value="Genomic_DNA"/>
</dbReference>
<dbReference type="PIR" id="S04828">
    <property type="entry name" value="S04828"/>
</dbReference>
<dbReference type="RefSeq" id="YP_007947968.1">
    <property type="nucleotide sequence ID" value="NC_021190.1"/>
</dbReference>
<dbReference type="GeneID" id="24366479"/>
<dbReference type="KEGG" id="vg:24366479"/>
<dbReference type="OrthoDB" id="6548at10239"/>
<dbReference type="GO" id="GO:0003677">
    <property type="term" value="F:DNA binding"/>
    <property type="evidence" value="ECO:0007669"/>
    <property type="project" value="UniProtKB-KW"/>
</dbReference>
<dbReference type="GO" id="GO:0045892">
    <property type="term" value="P:negative regulation of DNA-templated transcription"/>
    <property type="evidence" value="ECO:0007669"/>
    <property type="project" value="InterPro"/>
</dbReference>
<dbReference type="CDD" id="cd00093">
    <property type="entry name" value="HTH_XRE"/>
    <property type="match status" value="1"/>
</dbReference>
<dbReference type="CDD" id="cd06529">
    <property type="entry name" value="S24_LexA-like"/>
    <property type="match status" value="1"/>
</dbReference>
<dbReference type="Gene3D" id="1.10.260.40">
    <property type="entry name" value="lambda repressor-like DNA-binding domains"/>
    <property type="match status" value="1"/>
</dbReference>
<dbReference type="Gene3D" id="2.10.109.10">
    <property type="entry name" value="Umud Fragment, subunit A"/>
    <property type="match status" value="1"/>
</dbReference>
<dbReference type="InterPro" id="IPR001387">
    <property type="entry name" value="Cro/C1-type_HTH"/>
</dbReference>
<dbReference type="InterPro" id="IPR010982">
    <property type="entry name" value="Lambda_DNA-bd_dom_sf"/>
</dbReference>
<dbReference type="InterPro" id="IPR039418">
    <property type="entry name" value="LexA-like"/>
</dbReference>
<dbReference type="InterPro" id="IPR036286">
    <property type="entry name" value="LexA/Signal_pep-like_sf"/>
</dbReference>
<dbReference type="InterPro" id="IPR015927">
    <property type="entry name" value="Peptidase_S24_S26A/B/C"/>
</dbReference>
<dbReference type="InterPro" id="IPR010744">
    <property type="entry name" value="Phage_CI_N"/>
</dbReference>
<dbReference type="PANTHER" id="PTHR40661">
    <property type="match status" value="1"/>
</dbReference>
<dbReference type="PANTHER" id="PTHR40661:SF2">
    <property type="entry name" value="HTH-TYPE TRANSCRIPTIONAL REGULATOR PRTR"/>
    <property type="match status" value="1"/>
</dbReference>
<dbReference type="Pfam" id="PF00717">
    <property type="entry name" value="Peptidase_S24"/>
    <property type="match status" value="1"/>
</dbReference>
<dbReference type="Pfam" id="PF07022">
    <property type="entry name" value="Phage_CI_repr"/>
    <property type="match status" value="1"/>
</dbReference>
<dbReference type="SMART" id="SM00530">
    <property type="entry name" value="HTH_XRE"/>
    <property type="match status" value="1"/>
</dbReference>
<dbReference type="SUPFAM" id="SSF47413">
    <property type="entry name" value="lambda repressor-like DNA-binding domains"/>
    <property type="match status" value="1"/>
</dbReference>
<dbReference type="SUPFAM" id="SSF51306">
    <property type="entry name" value="LexA/Signal peptidase"/>
    <property type="match status" value="1"/>
</dbReference>
<dbReference type="PROSITE" id="PS50943">
    <property type="entry name" value="HTH_CROC1"/>
    <property type="match status" value="1"/>
</dbReference>
<sequence length="236" mass="26497">MSSISERIKFLLAREGLKQRDLAEALSTSPQTVNNWIKRDALSREAAQQISEKFGYSLDWLLNGEGSPKKDLESNIPPESEWGTVDAWDKNTPLPDDEVEVPFLKDIEFACGDGRVHDEDHNGFKLRFSKATLRRVGANSDGSGVLCFPASGDSMEPVIPDGATVAVDTGNKRVIDGELYAINQGDLKRIKQLYRKPGGKILIRSINRDYDDEEADEADVEIIGFVFWYSVLRYRR</sequence>